<proteinExistence type="inferred from homology"/>
<accession>B0UHY2</accession>
<feature type="chain" id="PRO_1000195671" description="Large ribosomal subunit protein uL11">
    <location>
        <begin position="1"/>
        <end position="149"/>
    </location>
</feature>
<organism>
    <name type="scientific">Methylobacterium sp. (strain 4-46)</name>
    <dbReference type="NCBI Taxonomy" id="426117"/>
    <lineage>
        <taxon>Bacteria</taxon>
        <taxon>Pseudomonadati</taxon>
        <taxon>Pseudomonadota</taxon>
        <taxon>Alphaproteobacteria</taxon>
        <taxon>Hyphomicrobiales</taxon>
        <taxon>Methylobacteriaceae</taxon>
        <taxon>Methylobacterium</taxon>
    </lineage>
</organism>
<protein>
    <recommendedName>
        <fullName evidence="1">Large ribosomal subunit protein uL11</fullName>
    </recommendedName>
    <alternativeName>
        <fullName evidence="2">50S ribosomal protein L11</fullName>
    </alternativeName>
</protein>
<sequence length="149" mass="15705">MAKKITGYVKLQVPAGAANPSPPIGPALGQRGLNIMEFCKAFNAKTAQIEKGTPIPVIITAYQDRSFTFEMKQPPVSFFLKKAAGMKIGKKPASGSKTPGKGAPAGRISEAQIREIAEKKMPDLNCDSVDSAVAMIRGSARAMGLEITG</sequence>
<reference key="1">
    <citation type="submission" date="2008-02" db="EMBL/GenBank/DDBJ databases">
        <title>Complete sequence of chromosome of Methylobacterium sp. 4-46.</title>
        <authorList>
            <consortium name="US DOE Joint Genome Institute"/>
            <person name="Copeland A."/>
            <person name="Lucas S."/>
            <person name="Lapidus A."/>
            <person name="Glavina del Rio T."/>
            <person name="Dalin E."/>
            <person name="Tice H."/>
            <person name="Bruce D."/>
            <person name="Goodwin L."/>
            <person name="Pitluck S."/>
            <person name="Chertkov O."/>
            <person name="Brettin T."/>
            <person name="Detter J.C."/>
            <person name="Han C."/>
            <person name="Kuske C.R."/>
            <person name="Schmutz J."/>
            <person name="Larimer F."/>
            <person name="Land M."/>
            <person name="Hauser L."/>
            <person name="Kyrpides N."/>
            <person name="Ivanova N."/>
            <person name="Marx C.J."/>
            <person name="Richardson P."/>
        </authorList>
    </citation>
    <scope>NUCLEOTIDE SEQUENCE [LARGE SCALE GENOMIC DNA]</scope>
    <source>
        <strain>4-46</strain>
    </source>
</reference>
<gene>
    <name evidence="1" type="primary">rplK</name>
    <name type="ordered locus">M446_0366</name>
</gene>
<comment type="function">
    <text evidence="1">Forms part of the ribosomal stalk which helps the ribosome interact with GTP-bound translation factors.</text>
</comment>
<comment type="subunit">
    <text evidence="1">Part of the ribosomal stalk of the 50S ribosomal subunit. Interacts with L10 and the large rRNA to form the base of the stalk. L10 forms an elongated spine to which L12 dimers bind in a sequential fashion forming a multimeric L10(L12)X complex.</text>
</comment>
<comment type="PTM">
    <text evidence="1">One or more lysine residues are methylated.</text>
</comment>
<comment type="similarity">
    <text evidence="1">Belongs to the universal ribosomal protein uL11 family.</text>
</comment>
<evidence type="ECO:0000255" key="1">
    <source>
        <dbReference type="HAMAP-Rule" id="MF_00736"/>
    </source>
</evidence>
<evidence type="ECO:0000305" key="2"/>
<dbReference type="EMBL" id="CP000943">
    <property type="protein sequence ID" value="ACA14937.1"/>
    <property type="molecule type" value="Genomic_DNA"/>
</dbReference>
<dbReference type="RefSeq" id="WP_012330355.1">
    <property type="nucleotide sequence ID" value="NC_010511.1"/>
</dbReference>
<dbReference type="SMR" id="B0UHY2"/>
<dbReference type="STRING" id="426117.M446_0366"/>
<dbReference type="KEGG" id="met:M446_0366"/>
<dbReference type="eggNOG" id="COG0080">
    <property type="taxonomic scope" value="Bacteria"/>
</dbReference>
<dbReference type="HOGENOM" id="CLU_074237_2_0_5"/>
<dbReference type="GO" id="GO:0022625">
    <property type="term" value="C:cytosolic large ribosomal subunit"/>
    <property type="evidence" value="ECO:0007669"/>
    <property type="project" value="TreeGrafter"/>
</dbReference>
<dbReference type="GO" id="GO:0070180">
    <property type="term" value="F:large ribosomal subunit rRNA binding"/>
    <property type="evidence" value="ECO:0007669"/>
    <property type="project" value="UniProtKB-UniRule"/>
</dbReference>
<dbReference type="GO" id="GO:0003735">
    <property type="term" value="F:structural constituent of ribosome"/>
    <property type="evidence" value="ECO:0007669"/>
    <property type="project" value="InterPro"/>
</dbReference>
<dbReference type="GO" id="GO:0006412">
    <property type="term" value="P:translation"/>
    <property type="evidence" value="ECO:0007669"/>
    <property type="project" value="UniProtKB-UniRule"/>
</dbReference>
<dbReference type="CDD" id="cd00349">
    <property type="entry name" value="Ribosomal_L11"/>
    <property type="match status" value="1"/>
</dbReference>
<dbReference type="FunFam" id="3.30.1550.10:FF:000001">
    <property type="entry name" value="50S ribosomal protein L11"/>
    <property type="match status" value="1"/>
</dbReference>
<dbReference type="Gene3D" id="1.10.10.250">
    <property type="entry name" value="Ribosomal protein L11, C-terminal domain"/>
    <property type="match status" value="1"/>
</dbReference>
<dbReference type="Gene3D" id="3.30.1550.10">
    <property type="entry name" value="Ribosomal protein L11/L12, N-terminal domain"/>
    <property type="match status" value="1"/>
</dbReference>
<dbReference type="HAMAP" id="MF_00736">
    <property type="entry name" value="Ribosomal_uL11"/>
    <property type="match status" value="1"/>
</dbReference>
<dbReference type="InterPro" id="IPR000911">
    <property type="entry name" value="Ribosomal_uL11"/>
</dbReference>
<dbReference type="InterPro" id="IPR006519">
    <property type="entry name" value="Ribosomal_uL11_bac-typ"/>
</dbReference>
<dbReference type="InterPro" id="IPR020783">
    <property type="entry name" value="Ribosomal_uL11_C"/>
</dbReference>
<dbReference type="InterPro" id="IPR036769">
    <property type="entry name" value="Ribosomal_uL11_C_sf"/>
</dbReference>
<dbReference type="InterPro" id="IPR020784">
    <property type="entry name" value="Ribosomal_uL11_N"/>
</dbReference>
<dbReference type="InterPro" id="IPR036796">
    <property type="entry name" value="Ribosomal_uL11_N_sf"/>
</dbReference>
<dbReference type="NCBIfam" id="TIGR01632">
    <property type="entry name" value="L11_bact"/>
    <property type="match status" value="1"/>
</dbReference>
<dbReference type="PANTHER" id="PTHR11661">
    <property type="entry name" value="60S RIBOSOMAL PROTEIN L12"/>
    <property type="match status" value="1"/>
</dbReference>
<dbReference type="PANTHER" id="PTHR11661:SF1">
    <property type="entry name" value="LARGE RIBOSOMAL SUBUNIT PROTEIN UL11M"/>
    <property type="match status" value="1"/>
</dbReference>
<dbReference type="Pfam" id="PF00298">
    <property type="entry name" value="Ribosomal_L11"/>
    <property type="match status" value="1"/>
</dbReference>
<dbReference type="Pfam" id="PF03946">
    <property type="entry name" value="Ribosomal_L11_N"/>
    <property type="match status" value="1"/>
</dbReference>
<dbReference type="SMART" id="SM00649">
    <property type="entry name" value="RL11"/>
    <property type="match status" value="1"/>
</dbReference>
<dbReference type="SUPFAM" id="SSF54747">
    <property type="entry name" value="Ribosomal L11/L12e N-terminal domain"/>
    <property type="match status" value="1"/>
</dbReference>
<dbReference type="SUPFAM" id="SSF46906">
    <property type="entry name" value="Ribosomal protein L11, C-terminal domain"/>
    <property type="match status" value="1"/>
</dbReference>
<name>RL11_METS4</name>
<keyword id="KW-0488">Methylation</keyword>
<keyword id="KW-0687">Ribonucleoprotein</keyword>
<keyword id="KW-0689">Ribosomal protein</keyword>
<keyword id="KW-0694">RNA-binding</keyword>
<keyword id="KW-0699">rRNA-binding</keyword>